<dbReference type="EMBL" id="AE013598">
    <property type="protein sequence ID" value="AAW76830.1"/>
    <property type="molecule type" value="Genomic_DNA"/>
</dbReference>
<dbReference type="SMR" id="Q5GWU1"/>
<dbReference type="STRING" id="291331.XOO3576"/>
<dbReference type="KEGG" id="xoo:XOO3576"/>
<dbReference type="HOGENOM" id="CLU_078858_2_1_6"/>
<dbReference type="Proteomes" id="UP000006735">
    <property type="component" value="Chromosome"/>
</dbReference>
<dbReference type="GO" id="GO:0022625">
    <property type="term" value="C:cytosolic large ribosomal subunit"/>
    <property type="evidence" value="ECO:0007669"/>
    <property type="project" value="TreeGrafter"/>
</dbReference>
<dbReference type="GO" id="GO:0019843">
    <property type="term" value="F:rRNA binding"/>
    <property type="evidence" value="ECO:0007669"/>
    <property type="project" value="UniProtKB-UniRule"/>
</dbReference>
<dbReference type="GO" id="GO:0003735">
    <property type="term" value="F:structural constituent of ribosome"/>
    <property type="evidence" value="ECO:0007669"/>
    <property type="project" value="InterPro"/>
</dbReference>
<dbReference type="GO" id="GO:0000049">
    <property type="term" value="F:tRNA binding"/>
    <property type="evidence" value="ECO:0007669"/>
    <property type="project" value="UniProtKB-KW"/>
</dbReference>
<dbReference type="GO" id="GO:0006412">
    <property type="term" value="P:translation"/>
    <property type="evidence" value="ECO:0007669"/>
    <property type="project" value="UniProtKB-UniRule"/>
</dbReference>
<dbReference type="CDD" id="cd01433">
    <property type="entry name" value="Ribosomal_L16_L10e"/>
    <property type="match status" value="1"/>
</dbReference>
<dbReference type="FunFam" id="3.90.1170.10:FF:000001">
    <property type="entry name" value="50S ribosomal protein L16"/>
    <property type="match status" value="1"/>
</dbReference>
<dbReference type="Gene3D" id="3.90.1170.10">
    <property type="entry name" value="Ribosomal protein L10e/L16"/>
    <property type="match status" value="1"/>
</dbReference>
<dbReference type="HAMAP" id="MF_01342">
    <property type="entry name" value="Ribosomal_uL16"/>
    <property type="match status" value="1"/>
</dbReference>
<dbReference type="InterPro" id="IPR047873">
    <property type="entry name" value="Ribosomal_uL16"/>
</dbReference>
<dbReference type="InterPro" id="IPR000114">
    <property type="entry name" value="Ribosomal_uL16_bact-type"/>
</dbReference>
<dbReference type="InterPro" id="IPR020798">
    <property type="entry name" value="Ribosomal_uL16_CS"/>
</dbReference>
<dbReference type="InterPro" id="IPR016180">
    <property type="entry name" value="Ribosomal_uL16_dom"/>
</dbReference>
<dbReference type="InterPro" id="IPR036920">
    <property type="entry name" value="Ribosomal_uL16_sf"/>
</dbReference>
<dbReference type="NCBIfam" id="TIGR01164">
    <property type="entry name" value="rplP_bact"/>
    <property type="match status" value="1"/>
</dbReference>
<dbReference type="PANTHER" id="PTHR12220">
    <property type="entry name" value="50S/60S RIBOSOMAL PROTEIN L16"/>
    <property type="match status" value="1"/>
</dbReference>
<dbReference type="PANTHER" id="PTHR12220:SF13">
    <property type="entry name" value="LARGE RIBOSOMAL SUBUNIT PROTEIN UL16M"/>
    <property type="match status" value="1"/>
</dbReference>
<dbReference type="Pfam" id="PF00252">
    <property type="entry name" value="Ribosomal_L16"/>
    <property type="match status" value="1"/>
</dbReference>
<dbReference type="PRINTS" id="PR00060">
    <property type="entry name" value="RIBOSOMALL16"/>
</dbReference>
<dbReference type="SUPFAM" id="SSF54686">
    <property type="entry name" value="Ribosomal protein L16p/L10e"/>
    <property type="match status" value="1"/>
</dbReference>
<dbReference type="PROSITE" id="PS00586">
    <property type="entry name" value="RIBOSOMAL_L16_1"/>
    <property type="match status" value="1"/>
</dbReference>
<dbReference type="PROSITE" id="PS00701">
    <property type="entry name" value="RIBOSOMAL_L16_2"/>
    <property type="match status" value="1"/>
</dbReference>
<accession>Q5GWU1</accession>
<keyword id="KW-1185">Reference proteome</keyword>
<keyword id="KW-0687">Ribonucleoprotein</keyword>
<keyword id="KW-0689">Ribosomal protein</keyword>
<keyword id="KW-0694">RNA-binding</keyword>
<keyword id="KW-0699">rRNA-binding</keyword>
<keyword id="KW-0820">tRNA-binding</keyword>
<sequence length="137" mass="15499">MLQPKRTKYRKMHKGRNDGLAWSGNAVSFGEYGLKATAHGQLTARQIEAARRTISRHVKKGGKMWIRVFPDKPITKKPIEVRMGSGKGNVEYWVAQIQPGRMIYEIEGIPEETAREAFRLAAAKLSVTTTFVTRTVR</sequence>
<comment type="function">
    <text evidence="1">Binds 23S rRNA and is also seen to make contacts with the A and possibly P site tRNAs.</text>
</comment>
<comment type="subunit">
    <text evidence="1">Part of the 50S ribosomal subunit.</text>
</comment>
<comment type="similarity">
    <text evidence="1">Belongs to the universal ribosomal protein uL16 family.</text>
</comment>
<evidence type="ECO:0000255" key="1">
    <source>
        <dbReference type="HAMAP-Rule" id="MF_01342"/>
    </source>
</evidence>
<evidence type="ECO:0000305" key="2"/>
<proteinExistence type="inferred from homology"/>
<organism>
    <name type="scientific">Xanthomonas oryzae pv. oryzae (strain KACC10331 / KXO85)</name>
    <dbReference type="NCBI Taxonomy" id="291331"/>
    <lineage>
        <taxon>Bacteria</taxon>
        <taxon>Pseudomonadati</taxon>
        <taxon>Pseudomonadota</taxon>
        <taxon>Gammaproteobacteria</taxon>
        <taxon>Lysobacterales</taxon>
        <taxon>Lysobacteraceae</taxon>
        <taxon>Xanthomonas</taxon>
    </lineage>
</organism>
<reference key="1">
    <citation type="journal article" date="2005" name="Nucleic Acids Res.">
        <title>The genome sequence of Xanthomonas oryzae pathovar oryzae KACC10331, the bacterial blight pathogen of rice.</title>
        <authorList>
            <person name="Lee B.-M."/>
            <person name="Park Y.-J."/>
            <person name="Park D.-S."/>
            <person name="Kang H.-W."/>
            <person name="Kim J.-G."/>
            <person name="Song E.-S."/>
            <person name="Park I.-C."/>
            <person name="Yoon U.-H."/>
            <person name="Hahn J.-H."/>
            <person name="Koo B.-S."/>
            <person name="Lee G.-B."/>
            <person name="Kim H."/>
            <person name="Park H.-S."/>
            <person name="Yoon K.-O."/>
            <person name="Kim J.-H."/>
            <person name="Jung C.-H."/>
            <person name="Koh N.-H."/>
            <person name="Seo J.-S."/>
            <person name="Go S.-J."/>
        </authorList>
    </citation>
    <scope>NUCLEOTIDE SEQUENCE [LARGE SCALE GENOMIC DNA]</scope>
    <source>
        <strain>KACC10331 / KXO85</strain>
    </source>
</reference>
<feature type="chain" id="PRO_0000062257" description="Large ribosomal subunit protein uL16">
    <location>
        <begin position="1"/>
        <end position="137"/>
    </location>
</feature>
<gene>
    <name evidence="1" type="primary">rplP</name>
    <name type="ordered locus">XOO3576</name>
</gene>
<name>RL16_XANOR</name>
<protein>
    <recommendedName>
        <fullName evidence="1">Large ribosomal subunit protein uL16</fullName>
    </recommendedName>
    <alternativeName>
        <fullName evidence="2">50S ribosomal protein L16</fullName>
    </alternativeName>
</protein>